<accession>B0T3J0</accession>
<organism>
    <name type="scientific">Caulobacter sp. (strain K31)</name>
    <dbReference type="NCBI Taxonomy" id="366602"/>
    <lineage>
        <taxon>Bacteria</taxon>
        <taxon>Pseudomonadati</taxon>
        <taxon>Pseudomonadota</taxon>
        <taxon>Alphaproteobacteria</taxon>
        <taxon>Caulobacterales</taxon>
        <taxon>Caulobacteraceae</taxon>
        <taxon>Caulobacter</taxon>
    </lineage>
</organism>
<reference key="1">
    <citation type="submission" date="2008-01" db="EMBL/GenBank/DDBJ databases">
        <title>Complete sequence of chromosome of Caulobacter sp. K31.</title>
        <authorList>
            <consortium name="US DOE Joint Genome Institute"/>
            <person name="Copeland A."/>
            <person name="Lucas S."/>
            <person name="Lapidus A."/>
            <person name="Barry K."/>
            <person name="Glavina del Rio T."/>
            <person name="Dalin E."/>
            <person name="Tice H."/>
            <person name="Pitluck S."/>
            <person name="Bruce D."/>
            <person name="Goodwin L."/>
            <person name="Thompson L.S."/>
            <person name="Brettin T."/>
            <person name="Detter J.C."/>
            <person name="Han C."/>
            <person name="Schmutz J."/>
            <person name="Larimer F."/>
            <person name="Land M."/>
            <person name="Hauser L."/>
            <person name="Kyrpides N."/>
            <person name="Kim E."/>
            <person name="Stephens C."/>
            <person name="Richardson P."/>
        </authorList>
    </citation>
    <scope>NUCLEOTIDE SEQUENCE [LARGE SCALE GENOMIC DNA]</scope>
    <source>
        <strain>K31</strain>
    </source>
</reference>
<dbReference type="EC" id="6.1.1.10" evidence="1"/>
<dbReference type="EMBL" id="CP000927">
    <property type="protein sequence ID" value="ABZ70876.1"/>
    <property type="molecule type" value="Genomic_DNA"/>
</dbReference>
<dbReference type="SMR" id="B0T3J0"/>
<dbReference type="STRING" id="366602.Caul_1747"/>
<dbReference type="KEGG" id="cak:Caul_1747"/>
<dbReference type="eggNOG" id="COG0143">
    <property type="taxonomic scope" value="Bacteria"/>
</dbReference>
<dbReference type="HOGENOM" id="CLU_009710_1_2_5"/>
<dbReference type="OrthoDB" id="9810191at2"/>
<dbReference type="GO" id="GO:0017101">
    <property type="term" value="C:aminoacyl-tRNA synthetase multienzyme complex"/>
    <property type="evidence" value="ECO:0007669"/>
    <property type="project" value="TreeGrafter"/>
</dbReference>
<dbReference type="GO" id="GO:0005829">
    <property type="term" value="C:cytosol"/>
    <property type="evidence" value="ECO:0007669"/>
    <property type="project" value="TreeGrafter"/>
</dbReference>
<dbReference type="GO" id="GO:0005524">
    <property type="term" value="F:ATP binding"/>
    <property type="evidence" value="ECO:0007669"/>
    <property type="project" value="UniProtKB-UniRule"/>
</dbReference>
<dbReference type="GO" id="GO:0046872">
    <property type="term" value="F:metal ion binding"/>
    <property type="evidence" value="ECO:0007669"/>
    <property type="project" value="UniProtKB-KW"/>
</dbReference>
<dbReference type="GO" id="GO:0004825">
    <property type="term" value="F:methionine-tRNA ligase activity"/>
    <property type="evidence" value="ECO:0007669"/>
    <property type="project" value="UniProtKB-UniRule"/>
</dbReference>
<dbReference type="GO" id="GO:0006431">
    <property type="term" value="P:methionyl-tRNA aminoacylation"/>
    <property type="evidence" value="ECO:0007669"/>
    <property type="project" value="UniProtKB-UniRule"/>
</dbReference>
<dbReference type="CDD" id="cd07957">
    <property type="entry name" value="Anticodon_Ia_Met"/>
    <property type="match status" value="1"/>
</dbReference>
<dbReference type="CDD" id="cd00814">
    <property type="entry name" value="MetRS_core"/>
    <property type="match status" value="1"/>
</dbReference>
<dbReference type="FunFam" id="2.20.28.20:FF:000001">
    <property type="entry name" value="Methionine--tRNA ligase"/>
    <property type="match status" value="1"/>
</dbReference>
<dbReference type="Gene3D" id="3.40.50.620">
    <property type="entry name" value="HUPs"/>
    <property type="match status" value="1"/>
</dbReference>
<dbReference type="Gene3D" id="1.10.730.10">
    <property type="entry name" value="Isoleucyl-tRNA Synthetase, Domain 1"/>
    <property type="match status" value="1"/>
</dbReference>
<dbReference type="Gene3D" id="2.20.28.20">
    <property type="entry name" value="Methionyl-tRNA synthetase, Zn-domain"/>
    <property type="match status" value="1"/>
</dbReference>
<dbReference type="HAMAP" id="MF_00098">
    <property type="entry name" value="Met_tRNA_synth_type1"/>
    <property type="match status" value="1"/>
</dbReference>
<dbReference type="InterPro" id="IPR041872">
    <property type="entry name" value="Anticodon_Met"/>
</dbReference>
<dbReference type="InterPro" id="IPR023458">
    <property type="entry name" value="Met-tRNA_ligase_1"/>
</dbReference>
<dbReference type="InterPro" id="IPR014758">
    <property type="entry name" value="Met-tRNA_synth"/>
</dbReference>
<dbReference type="InterPro" id="IPR015413">
    <property type="entry name" value="Methionyl/Leucyl_tRNA_Synth"/>
</dbReference>
<dbReference type="InterPro" id="IPR033911">
    <property type="entry name" value="MetRS_core"/>
</dbReference>
<dbReference type="InterPro" id="IPR029038">
    <property type="entry name" value="MetRS_Zn"/>
</dbReference>
<dbReference type="InterPro" id="IPR014729">
    <property type="entry name" value="Rossmann-like_a/b/a_fold"/>
</dbReference>
<dbReference type="InterPro" id="IPR009080">
    <property type="entry name" value="tRNAsynth_Ia_anticodon-bd"/>
</dbReference>
<dbReference type="NCBIfam" id="TIGR00398">
    <property type="entry name" value="metG"/>
    <property type="match status" value="1"/>
</dbReference>
<dbReference type="PANTHER" id="PTHR45765">
    <property type="entry name" value="METHIONINE--TRNA LIGASE"/>
    <property type="match status" value="1"/>
</dbReference>
<dbReference type="PANTHER" id="PTHR45765:SF1">
    <property type="entry name" value="METHIONINE--TRNA LIGASE, CYTOPLASMIC"/>
    <property type="match status" value="1"/>
</dbReference>
<dbReference type="Pfam" id="PF19303">
    <property type="entry name" value="Anticodon_3"/>
    <property type="match status" value="1"/>
</dbReference>
<dbReference type="Pfam" id="PF09334">
    <property type="entry name" value="tRNA-synt_1g"/>
    <property type="match status" value="1"/>
</dbReference>
<dbReference type="PRINTS" id="PR01041">
    <property type="entry name" value="TRNASYNTHMET"/>
</dbReference>
<dbReference type="SUPFAM" id="SSF47323">
    <property type="entry name" value="Anticodon-binding domain of a subclass of class I aminoacyl-tRNA synthetases"/>
    <property type="match status" value="1"/>
</dbReference>
<dbReference type="SUPFAM" id="SSF57770">
    <property type="entry name" value="Methionyl-tRNA synthetase (MetRS), Zn-domain"/>
    <property type="match status" value="1"/>
</dbReference>
<dbReference type="SUPFAM" id="SSF52374">
    <property type="entry name" value="Nucleotidylyl transferase"/>
    <property type="match status" value="1"/>
</dbReference>
<comment type="function">
    <text evidence="1">Is required not only for elongation of protein synthesis but also for the initiation of all mRNA translation through initiator tRNA(fMet) aminoacylation.</text>
</comment>
<comment type="catalytic activity">
    <reaction evidence="1">
        <text>tRNA(Met) + L-methionine + ATP = L-methionyl-tRNA(Met) + AMP + diphosphate</text>
        <dbReference type="Rhea" id="RHEA:13481"/>
        <dbReference type="Rhea" id="RHEA-COMP:9667"/>
        <dbReference type="Rhea" id="RHEA-COMP:9698"/>
        <dbReference type="ChEBI" id="CHEBI:30616"/>
        <dbReference type="ChEBI" id="CHEBI:33019"/>
        <dbReference type="ChEBI" id="CHEBI:57844"/>
        <dbReference type="ChEBI" id="CHEBI:78442"/>
        <dbReference type="ChEBI" id="CHEBI:78530"/>
        <dbReference type="ChEBI" id="CHEBI:456215"/>
        <dbReference type="EC" id="6.1.1.10"/>
    </reaction>
</comment>
<comment type="cofactor">
    <cofactor evidence="1">
        <name>Zn(2+)</name>
        <dbReference type="ChEBI" id="CHEBI:29105"/>
    </cofactor>
    <text evidence="1">Binds 1 zinc ion per subunit.</text>
</comment>
<comment type="subunit">
    <text evidence="1">Monomer.</text>
</comment>
<comment type="subcellular location">
    <subcellularLocation>
        <location evidence="1">Cytoplasm</location>
    </subcellularLocation>
</comment>
<comment type="similarity">
    <text evidence="1">Belongs to the class-I aminoacyl-tRNA synthetase family. MetG type 1 subfamily.</text>
</comment>
<gene>
    <name evidence="1" type="primary">metG</name>
    <name type="ordered locus">Caul_1747</name>
</gene>
<feature type="chain" id="PRO_1000075580" description="Methionine--tRNA ligase">
    <location>
        <begin position="1"/>
        <end position="569"/>
    </location>
</feature>
<feature type="short sequence motif" description="'HIGH' region">
    <location>
        <begin position="11"/>
        <end position="21"/>
    </location>
</feature>
<feature type="short sequence motif" description="'KMSKS' region">
    <location>
        <begin position="342"/>
        <end position="346"/>
    </location>
</feature>
<feature type="binding site" evidence="1">
    <location>
        <position position="143"/>
    </location>
    <ligand>
        <name>Zn(2+)</name>
        <dbReference type="ChEBI" id="CHEBI:29105"/>
    </ligand>
</feature>
<feature type="binding site" evidence="1">
    <location>
        <position position="146"/>
    </location>
    <ligand>
        <name>Zn(2+)</name>
        <dbReference type="ChEBI" id="CHEBI:29105"/>
    </ligand>
</feature>
<feature type="binding site" evidence="1">
    <location>
        <position position="156"/>
    </location>
    <ligand>
        <name>Zn(2+)</name>
        <dbReference type="ChEBI" id="CHEBI:29105"/>
    </ligand>
</feature>
<feature type="binding site" evidence="1">
    <location>
        <position position="159"/>
    </location>
    <ligand>
        <name>Zn(2+)</name>
        <dbReference type="ChEBI" id="CHEBI:29105"/>
    </ligand>
</feature>
<feature type="binding site" evidence="1">
    <location>
        <position position="345"/>
    </location>
    <ligand>
        <name>ATP</name>
        <dbReference type="ChEBI" id="CHEBI:30616"/>
    </ligand>
</feature>
<evidence type="ECO:0000255" key="1">
    <source>
        <dbReference type="HAMAP-Rule" id="MF_00098"/>
    </source>
</evidence>
<sequence length="569" mass="63906">MARILITSALPYINGVKHLGNLAGSMLPADVYARFQRARGNDTLYICATDEHGTPAELAAAAAGQDVAEYCAEQHVLQHDVGRAFGLSWDHFGRSSSPQNHRLTQHFCEVLEERGLIEERVDQMVYSIDDARFLPDRYIEGTCPHCGFDKARGDQCDNCGNLLDPTELKDPYSVISGSRNLEVRDTRHLYLLQTKMADKIRAWIDSHPDWQLLAKSIAYKHLDEGLIDRGITRDLAWGIPVTKGEFPRPGFEDKVFYVWFDAPIEYIAATQEWADEGAGRDWKSWWRTDEGADDVRYVQFMGKDNVAFHTVSFPATILGSQEPWKSVDMLKAFNWLNWYGGKFSTSNKRGVFMDAALEILPPDFWRWYLTSNAPESSDTAFTWEQFASAVNRDLADVLGNFVNRILKFTEGKFDGVIPDGGAPGPLEEKLYADVSARLADLTEQMDAVEVRKSAQALRALWVVGNEYLQEAAPWTAIKTDRDRAAVIVRTALNLAALYARISAPFIPFAAEKIGEAFQLPWPPVWPTTDAAAELSSLPVGLSVRAPEVLFKKIEDEQIAEWTRRFGGAE</sequence>
<proteinExistence type="inferred from homology"/>
<keyword id="KW-0030">Aminoacyl-tRNA synthetase</keyword>
<keyword id="KW-0067">ATP-binding</keyword>
<keyword id="KW-0963">Cytoplasm</keyword>
<keyword id="KW-0436">Ligase</keyword>
<keyword id="KW-0479">Metal-binding</keyword>
<keyword id="KW-0547">Nucleotide-binding</keyword>
<keyword id="KW-0648">Protein biosynthesis</keyword>
<keyword id="KW-0862">Zinc</keyword>
<name>SYM_CAUSK</name>
<protein>
    <recommendedName>
        <fullName evidence="1">Methionine--tRNA ligase</fullName>
        <ecNumber evidence="1">6.1.1.10</ecNumber>
    </recommendedName>
    <alternativeName>
        <fullName evidence="1">Methionyl-tRNA synthetase</fullName>
        <shortName evidence="1">MetRS</shortName>
    </alternativeName>
</protein>